<sequence length="209" mass="23160">MITLLNLLLAEIAGFITYQHFTASPLRYFIPYPAELLLFAIPLVGLAVRRPFSFYYYSVLIFFNISPILARSETFEGIIDTLNAIDALYNTGTSAIAESLKVAFIGHSTSVDGLLAVTWLYILAEVFQGNWESIKGAKTGGVEIERAYLVYLPAFFFALLVYFLYPFLMSEIDFGLERIVAAVLGIAAFFAGVYLLSRGVEEEDINSGG</sequence>
<proteinExistence type="predicted"/>
<dbReference type="EMBL" id="AE000782">
    <property type="protein sequence ID" value="AAB91250.1"/>
    <property type="molecule type" value="Genomic_DNA"/>
</dbReference>
<dbReference type="PIR" id="H69552">
    <property type="entry name" value="H69552"/>
</dbReference>
<dbReference type="RefSeq" id="WP_010879910.1">
    <property type="nucleotide sequence ID" value="NC_000917.1"/>
</dbReference>
<dbReference type="STRING" id="224325.AF_2423"/>
<dbReference type="PaxDb" id="224325-AF_2423"/>
<dbReference type="EnsemblBacteria" id="AAB91250">
    <property type="protein sequence ID" value="AAB91250"/>
    <property type="gene ID" value="AF_2423"/>
</dbReference>
<dbReference type="KEGG" id="afu:AF_2423"/>
<dbReference type="eggNOG" id="arCOG10982">
    <property type="taxonomic scope" value="Archaea"/>
</dbReference>
<dbReference type="HOGENOM" id="CLU_1313063_0_0_2"/>
<dbReference type="Proteomes" id="UP000002199">
    <property type="component" value="Chromosome"/>
</dbReference>
<dbReference type="GO" id="GO:0005886">
    <property type="term" value="C:plasma membrane"/>
    <property type="evidence" value="ECO:0007669"/>
    <property type="project" value="UniProtKB-SubCell"/>
</dbReference>
<accession>O30248</accession>
<reference key="1">
    <citation type="journal article" date="1997" name="Nature">
        <title>The complete genome sequence of the hyperthermophilic, sulphate-reducing archaeon Archaeoglobus fulgidus.</title>
        <authorList>
            <person name="Klenk H.-P."/>
            <person name="Clayton R.A."/>
            <person name="Tomb J.-F."/>
            <person name="White O."/>
            <person name="Nelson K.E."/>
            <person name="Ketchum K.A."/>
            <person name="Dodson R.J."/>
            <person name="Gwinn M.L."/>
            <person name="Hickey E.K."/>
            <person name="Peterson J.D."/>
            <person name="Richardson D.L."/>
            <person name="Kerlavage A.R."/>
            <person name="Graham D.E."/>
            <person name="Kyrpides N.C."/>
            <person name="Fleischmann R.D."/>
            <person name="Quackenbush J."/>
            <person name="Lee N.H."/>
            <person name="Sutton G.G."/>
            <person name="Gill S.R."/>
            <person name="Kirkness E.F."/>
            <person name="Dougherty B.A."/>
            <person name="McKenney K."/>
            <person name="Adams M.D."/>
            <person name="Loftus B.J."/>
            <person name="Peterson S.N."/>
            <person name="Reich C.I."/>
            <person name="McNeil L.K."/>
            <person name="Badger J.H."/>
            <person name="Glodek A."/>
            <person name="Zhou L."/>
            <person name="Overbeek R."/>
            <person name="Gocayne J.D."/>
            <person name="Weidman J.F."/>
            <person name="McDonald L.A."/>
            <person name="Utterback T.R."/>
            <person name="Cotton M.D."/>
            <person name="Spriggs T."/>
            <person name="Artiach P."/>
            <person name="Kaine B.P."/>
            <person name="Sykes S.M."/>
            <person name="Sadow P.W."/>
            <person name="D'Andrea K.P."/>
            <person name="Bowman C."/>
            <person name="Fujii C."/>
            <person name="Garland S.A."/>
            <person name="Mason T.M."/>
            <person name="Olsen G.J."/>
            <person name="Fraser C.M."/>
            <person name="Smith H.O."/>
            <person name="Woese C.R."/>
            <person name="Venter J.C."/>
        </authorList>
    </citation>
    <scope>NUCLEOTIDE SEQUENCE [LARGE SCALE GENOMIC DNA]</scope>
    <source>
        <strain>ATCC 49558 / DSM 4304 / JCM 9628 / NBRC 100126 / VC-16</strain>
    </source>
</reference>
<evidence type="ECO:0000255" key="1"/>
<evidence type="ECO:0000305" key="2"/>
<name>Y2423_ARCFU</name>
<feature type="chain" id="PRO_0000128155" description="Uncharacterized protein AF_2423">
    <location>
        <begin position="1"/>
        <end position="209"/>
    </location>
</feature>
<feature type="transmembrane region" description="Helical" evidence="1">
    <location>
        <begin position="26"/>
        <end position="48"/>
    </location>
</feature>
<feature type="transmembrane region" description="Helical" evidence="1">
    <location>
        <begin position="147"/>
        <end position="169"/>
    </location>
</feature>
<feature type="transmembrane region" description="Helical" evidence="1">
    <location>
        <begin position="179"/>
        <end position="196"/>
    </location>
</feature>
<organism>
    <name type="scientific">Archaeoglobus fulgidus (strain ATCC 49558 / DSM 4304 / JCM 9628 / NBRC 100126 / VC-16)</name>
    <dbReference type="NCBI Taxonomy" id="224325"/>
    <lineage>
        <taxon>Archaea</taxon>
        <taxon>Methanobacteriati</taxon>
        <taxon>Methanobacteriota</taxon>
        <taxon>Archaeoglobi</taxon>
        <taxon>Archaeoglobales</taxon>
        <taxon>Archaeoglobaceae</taxon>
        <taxon>Archaeoglobus</taxon>
    </lineage>
</organism>
<gene>
    <name type="ordered locus">AF_2423</name>
</gene>
<keyword id="KW-1003">Cell membrane</keyword>
<keyword id="KW-0472">Membrane</keyword>
<keyword id="KW-1185">Reference proteome</keyword>
<keyword id="KW-0812">Transmembrane</keyword>
<keyword id="KW-1133">Transmembrane helix</keyword>
<comment type="subcellular location">
    <subcellularLocation>
        <location evidence="2">Cell membrane</location>
        <topology evidence="2">Multi-pass membrane protein</topology>
    </subcellularLocation>
</comment>
<protein>
    <recommendedName>
        <fullName>Uncharacterized protein AF_2423</fullName>
    </recommendedName>
</protein>